<name>CDPAS_THEGJ</name>
<feature type="chain" id="PRO_1000213611" description="CDP-archaeol synthase">
    <location>
        <begin position="1"/>
        <end position="171"/>
    </location>
</feature>
<feature type="transmembrane region" description="Helical" evidence="1">
    <location>
        <begin position="7"/>
        <end position="27"/>
    </location>
</feature>
<feature type="transmembrane region" description="Helical" evidence="1">
    <location>
        <begin position="55"/>
        <end position="75"/>
    </location>
</feature>
<feature type="transmembrane region" description="Helical" evidence="1">
    <location>
        <begin position="84"/>
        <end position="104"/>
    </location>
</feature>
<feature type="transmembrane region" description="Helical" evidence="1">
    <location>
        <begin position="115"/>
        <end position="135"/>
    </location>
</feature>
<feature type="transmembrane region" description="Helical" evidence="1">
    <location>
        <begin position="141"/>
        <end position="161"/>
    </location>
</feature>
<accession>C5A2X0</accession>
<reference key="1">
    <citation type="journal article" date="2007" name="Genome Biol.">
        <title>Genome analysis and genome-wide proteomics of Thermococcus gammatolerans, the most radioresistant organism known amongst the Archaea.</title>
        <authorList>
            <person name="Zivanovic Y."/>
            <person name="Armengaud J."/>
            <person name="Lagorce A."/>
            <person name="Leplat C."/>
            <person name="Guerin P."/>
            <person name="Dutertre M."/>
            <person name="Anthouard V."/>
            <person name="Forterre P."/>
            <person name="Wincker P."/>
            <person name="Confalonieri F."/>
        </authorList>
    </citation>
    <scope>NUCLEOTIDE SEQUENCE [LARGE SCALE GENOMIC DNA]</scope>
    <source>
        <strain>DSM 15229 / JCM 11827 / EJ3</strain>
    </source>
</reference>
<keyword id="KW-1003">Cell membrane</keyword>
<keyword id="KW-0444">Lipid biosynthesis</keyword>
<keyword id="KW-0443">Lipid metabolism</keyword>
<keyword id="KW-0460">Magnesium</keyword>
<keyword id="KW-0472">Membrane</keyword>
<keyword id="KW-0594">Phospholipid biosynthesis</keyword>
<keyword id="KW-1208">Phospholipid metabolism</keyword>
<keyword id="KW-1185">Reference proteome</keyword>
<keyword id="KW-0808">Transferase</keyword>
<keyword id="KW-0812">Transmembrane</keyword>
<keyword id="KW-1133">Transmembrane helix</keyword>
<protein>
    <recommendedName>
        <fullName evidence="1">CDP-archaeol synthase</fullName>
        <ecNumber evidence="1">2.7.7.67</ecNumber>
    </recommendedName>
    <alternativeName>
        <fullName evidence="1">CDP-2,3-bis-(O-geranylgeranyl)-sn-glycerol synthase</fullName>
    </alternativeName>
</protein>
<organism>
    <name type="scientific">Thermococcus gammatolerans (strain DSM 15229 / JCM 11827 / EJ3)</name>
    <dbReference type="NCBI Taxonomy" id="593117"/>
    <lineage>
        <taxon>Archaea</taxon>
        <taxon>Methanobacteriati</taxon>
        <taxon>Methanobacteriota</taxon>
        <taxon>Thermococci</taxon>
        <taxon>Thermococcales</taxon>
        <taxon>Thermococcaceae</taxon>
        <taxon>Thermococcus</taxon>
    </lineage>
</organism>
<evidence type="ECO:0000255" key="1">
    <source>
        <dbReference type="HAMAP-Rule" id="MF_01117"/>
    </source>
</evidence>
<dbReference type="EC" id="2.7.7.67" evidence="1"/>
<dbReference type="EMBL" id="CP001398">
    <property type="protein sequence ID" value="ACS34631.1"/>
    <property type="molecule type" value="Genomic_DNA"/>
</dbReference>
<dbReference type="RefSeq" id="WP_015859734.1">
    <property type="nucleotide sequence ID" value="NC_012804.1"/>
</dbReference>
<dbReference type="SMR" id="C5A2X0"/>
<dbReference type="STRING" id="593117.TGAM_2129"/>
<dbReference type="PaxDb" id="593117-TGAM_2129"/>
<dbReference type="GeneID" id="7987091"/>
<dbReference type="KEGG" id="tga:TGAM_2129"/>
<dbReference type="PATRIC" id="fig|593117.10.peg.2135"/>
<dbReference type="eggNOG" id="arCOG04106">
    <property type="taxonomic scope" value="Archaea"/>
</dbReference>
<dbReference type="HOGENOM" id="CLU_105710_0_0_2"/>
<dbReference type="OrthoDB" id="45383at2157"/>
<dbReference type="UniPathway" id="UPA00940"/>
<dbReference type="Proteomes" id="UP000001488">
    <property type="component" value="Chromosome"/>
</dbReference>
<dbReference type="GO" id="GO:0005886">
    <property type="term" value="C:plasma membrane"/>
    <property type="evidence" value="ECO:0007669"/>
    <property type="project" value="UniProtKB-SubCell"/>
</dbReference>
<dbReference type="GO" id="GO:0043338">
    <property type="term" value="F:CDP-2,3-bis-(O-geranylgeranyl)-sn-glycerol synthase activity"/>
    <property type="evidence" value="ECO:0007669"/>
    <property type="project" value="UniProtKB-EC"/>
</dbReference>
<dbReference type="GO" id="GO:0046474">
    <property type="term" value="P:glycerophospholipid biosynthetic process"/>
    <property type="evidence" value="ECO:0007669"/>
    <property type="project" value="UniProtKB-UniRule"/>
</dbReference>
<dbReference type="HAMAP" id="MF_01117">
    <property type="entry name" value="CDP_archaeol_synth"/>
    <property type="match status" value="1"/>
</dbReference>
<dbReference type="InterPro" id="IPR032690">
    <property type="entry name" value="CarS"/>
</dbReference>
<dbReference type="InterPro" id="IPR002726">
    <property type="entry name" value="CarS_archaea"/>
</dbReference>
<dbReference type="NCBIfam" id="NF003114">
    <property type="entry name" value="PRK04032.1"/>
    <property type="match status" value="1"/>
</dbReference>
<dbReference type="PANTHER" id="PTHR39650">
    <property type="entry name" value="CDP-ARCHAEOL SYNTHASE"/>
    <property type="match status" value="1"/>
</dbReference>
<dbReference type="PANTHER" id="PTHR39650:SF1">
    <property type="entry name" value="CDP-ARCHAEOL SYNTHASE"/>
    <property type="match status" value="1"/>
</dbReference>
<dbReference type="Pfam" id="PF01864">
    <property type="entry name" value="CarS-like"/>
    <property type="match status" value="1"/>
</dbReference>
<gene>
    <name evidence="1" type="primary">carS</name>
    <name type="ordered locus">TGAM_2129</name>
</gene>
<proteinExistence type="inferred from homology"/>
<comment type="function">
    <text evidence="1">Catalyzes the formation of CDP-2,3-bis-(O-geranylgeranyl)-sn-glycerol (CDP-archaeol) from 2,3-bis-(O-geranylgeranyl)-sn-glycerol 1-phosphate (DGGGP) and CTP. This reaction is the third ether-bond-formation step in the biosynthesis of archaeal membrane lipids.</text>
</comment>
<comment type="catalytic activity">
    <reaction evidence="1">
        <text>2,3-bis-O-(geranylgeranyl)-sn-glycerol 1-phosphate + CTP + H(+) = CDP-2,3-bis-O-(geranylgeranyl)-sn-glycerol + diphosphate</text>
        <dbReference type="Rhea" id="RHEA:25690"/>
        <dbReference type="ChEBI" id="CHEBI:15378"/>
        <dbReference type="ChEBI" id="CHEBI:33019"/>
        <dbReference type="ChEBI" id="CHEBI:37563"/>
        <dbReference type="ChEBI" id="CHEBI:58837"/>
        <dbReference type="ChEBI" id="CHEBI:58838"/>
        <dbReference type="EC" id="2.7.7.67"/>
    </reaction>
</comment>
<comment type="cofactor">
    <cofactor evidence="1">
        <name>Mg(2+)</name>
        <dbReference type="ChEBI" id="CHEBI:18420"/>
    </cofactor>
</comment>
<comment type="pathway">
    <text evidence="1">Membrane lipid metabolism; glycerophospholipid metabolism.</text>
</comment>
<comment type="subcellular location">
    <subcellularLocation>
        <location evidence="1">Cell membrane</location>
        <topology evidence="1">Multi-pass membrane protein</topology>
    </subcellularLocation>
</comment>
<comment type="similarity">
    <text evidence="1">Belongs to the CDP-archaeol synthase family.</text>
</comment>
<sequence>MGALSSMFWALWYILPAYFANASPVLLGGGRPIDGGRKWRDGNRILGDGKTWRGFLGGVSVGTLVGVLQYYLTPAFYGSLKTAVLLAFLLSFGALMGDLVGSFIKRRLNLPRGYPAVGLDQLGFLISALAFAYPVKTISSGQMLFLLIFTPLVHWGANYFAYKMGWKSVPW</sequence>